<proteinExistence type="inferred from homology"/>
<name>OBG_STRGG</name>
<sequence length="478" mass="51024">MTTFVDRVELHAAAGNGGHGCASVHREKFKPLGGPDGGNGGRGGDVILVVEQSVTTLLDYHHSPHRKATNGQPGAGDNRSGKDGQDLVLPVPDGTVVLDKAGNVLADLVGQGTTFVAGQGGRGGLGNAALASARRKAPGFALLGEPGESRDIVLELKTVADVALVGYPSAGKSSLISVLSAAKPKIADYPFTTLVPNLGVVTAGSTVYTIADVPGLIPGASQGKGLGLEFLRHVERCSVLVHVLDTATLESDRDPVSDLDMIEEELRLYGGLENRPRIVALNKVDIPDGQDLADMIRPDLEARGYRVFEVSAIAHKGLKELSFALAGIIAEARATKPKEEATRIVIRPRAVDDAGFTVTLEDDGIYRVRGEKPERWVRQTDFNNDEAVGYLADRLNRLGVEDSLMKAGARAGDGVAIGPEENAVVFDWEPTVTAGAEMLGRRGEDHRLEEPRPAAQRRRERDAERDDAEKEYDEFDPF</sequence>
<feature type="chain" id="PRO_0000386325" description="GTPase Obg">
    <location>
        <begin position="1"/>
        <end position="478"/>
    </location>
</feature>
<feature type="domain" description="Obg" evidence="3">
    <location>
        <begin position="2"/>
        <end position="159"/>
    </location>
</feature>
<feature type="domain" description="OBG-type G" evidence="1">
    <location>
        <begin position="160"/>
        <end position="330"/>
    </location>
</feature>
<feature type="domain" description="OCT" evidence="2">
    <location>
        <begin position="348"/>
        <end position="430"/>
    </location>
</feature>
<feature type="region of interest" description="Disordered" evidence="4">
    <location>
        <begin position="61"/>
        <end position="87"/>
    </location>
</feature>
<feature type="region of interest" description="Disordered" evidence="4">
    <location>
        <begin position="436"/>
        <end position="478"/>
    </location>
</feature>
<feature type="compositionally biased region" description="Basic and acidic residues" evidence="4">
    <location>
        <begin position="439"/>
        <end position="468"/>
    </location>
</feature>
<feature type="compositionally biased region" description="Acidic residues" evidence="4">
    <location>
        <begin position="469"/>
        <end position="478"/>
    </location>
</feature>
<feature type="binding site" evidence="1">
    <location>
        <begin position="166"/>
        <end position="173"/>
    </location>
    <ligand>
        <name>GTP</name>
        <dbReference type="ChEBI" id="CHEBI:37565"/>
    </ligand>
</feature>
<feature type="binding site" evidence="1">
    <location>
        <position position="173"/>
    </location>
    <ligand>
        <name>Mg(2+)</name>
        <dbReference type="ChEBI" id="CHEBI:18420"/>
    </ligand>
</feature>
<feature type="binding site" evidence="1">
    <location>
        <begin position="191"/>
        <end position="195"/>
    </location>
    <ligand>
        <name>GTP</name>
        <dbReference type="ChEBI" id="CHEBI:37565"/>
    </ligand>
</feature>
<feature type="binding site" evidence="1">
    <location>
        <position position="193"/>
    </location>
    <ligand>
        <name>Mg(2+)</name>
        <dbReference type="ChEBI" id="CHEBI:18420"/>
    </ligand>
</feature>
<feature type="binding site" evidence="1">
    <location>
        <begin position="212"/>
        <end position="215"/>
    </location>
    <ligand>
        <name>GTP</name>
        <dbReference type="ChEBI" id="CHEBI:37565"/>
    </ligand>
</feature>
<feature type="binding site" evidence="1">
    <location>
        <begin position="282"/>
        <end position="285"/>
    </location>
    <ligand>
        <name>GTP</name>
        <dbReference type="ChEBI" id="CHEBI:37565"/>
    </ligand>
</feature>
<feature type="binding site" evidence="1">
    <location>
        <begin position="311"/>
        <end position="313"/>
    </location>
    <ligand>
        <name>GTP</name>
        <dbReference type="ChEBI" id="CHEBI:37565"/>
    </ligand>
</feature>
<accession>B1VXD8</accession>
<organism>
    <name type="scientific">Streptomyces griseus subsp. griseus (strain JCM 4626 / CBS 651.72 / NBRC 13350 / KCC S-0626 / ISP 5235)</name>
    <dbReference type="NCBI Taxonomy" id="455632"/>
    <lineage>
        <taxon>Bacteria</taxon>
        <taxon>Bacillati</taxon>
        <taxon>Actinomycetota</taxon>
        <taxon>Actinomycetes</taxon>
        <taxon>Kitasatosporales</taxon>
        <taxon>Streptomycetaceae</taxon>
        <taxon>Streptomyces</taxon>
    </lineage>
</organism>
<evidence type="ECO:0000255" key="1">
    <source>
        <dbReference type="HAMAP-Rule" id="MF_01454"/>
    </source>
</evidence>
<evidence type="ECO:0000255" key="2">
    <source>
        <dbReference type="PROSITE-ProRule" id="PRU01229"/>
    </source>
</evidence>
<evidence type="ECO:0000255" key="3">
    <source>
        <dbReference type="PROSITE-ProRule" id="PRU01231"/>
    </source>
</evidence>
<evidence type="ECO:0000256" key="4">
    <source>
        <dbReference type="SAM" id="MobiDB-lite"/>
    </source>
</evidence>
<gene>
    <name evidence="1" type="primary">obg</name>
    <name type="ordered locus">SGR_4955</name>
</gene>
<comment type="function">
    <text evidence="1">An essential GTPase which binds GTP, GDP and possibly (p)ppGpp with moderate affinity, with high nucleotide exchange rates and a fairly low GTP hydrolysis rate. Plays a role in control of the cell cycle, stress response, ribosome biogenesis and in those bacteria that undergo differentiation, in morphogenesis control.</text>
</comment>
<comment type="cofactor">
    <cofactor evidence="1">
        <name>Mg(2+)</name>
        <dbReference type="ChEBI" id="CHEBI:18420"/>
    </cofactor>
</comment>
<comment type="subunit">
    <text evidence="1">Monomer.</text>
</comment>
<comment type="subcellular location">
    <subcellularLocation>
        <location evidence="1">Cytoplasm</location>
    </subcellularLocation>
</comment>
<comment type="similarity">
    <text evidence="1">Belongs to the TRAFAC class OBG-HflX-like GTPase superfamily. OBG GTPase family.</text>
</comment>
<dbReference type="EC" id="3.6.5.-" evidence="1"/>
<dbReference type="EMBL" id="AP009493">
    <property type="protein sequence ID" value="BAG21784.1"/>
    <property type="molecule type" value="Genomic_DNA"/>
</dbReference>
<dbReference type="SMR" id="B1VXD8"/>
<dbReference type="KEGG" id="sgr:SGR_4955"/>
<dbReference type="eggNOG" id="COG0536">
    <property type="taxonomic scope" value="Bacteria"/>
</dbReference>
<dbReference type="HOGENOM" id="CLU_011747_1_3_11"/>
<dbReference type="Proteomes" id="UP000001685">
    <property type="component" value="Chromosome"/>
</dbReference>
<dbReference type="GO" id="GO:0005737">
    <property type="term" value="C:cytoplasm"/>
    <property type="evidence" value="ECO:0007669"/>
    <property type="project" value="UniProtKB-SubCell"/>
</dbReference>
<dbReference type="GO" id="GO:0005525">
    <property type="term" value="F:GTP binding"/>
    <property type="evidence" value="ECO:0007669"/>
    <property type="project" value="UniProtKB-UniRule"/>
</dbReference>
<dbReference type="GO" id="GO:0003924">
    <property type="term" value="F:GTPase activity"/>
    <property type="evidence" value="ECO:0007669"/>
    <property type="project" value="UniProtKB-UniRule"/>
</dbReference>
<dbReference type="GO" id="GO:0000287">
    <property type="term" value="F:magnesium ion binding"/>
    <property type="evidence" value="ECO:0007669"/>
    <property type="project" value="InterPro"/>
</dbReference>
<dbReference type="GO" id="GO:0042254">
    <property type="term" value="P:ribosome biogenesis"/>
    <property type="evidence" value="ECO:0007669"/>
    <property type="project" value="UniProtKB-UniRule"/>
</dbReference>
<dbReference type="CDD" id="cd01898">
    <property type="entry name" value="Obg"/>
    <property type="match status" value="1"/>
</dbReference>
<dbReference type="FunFam" id="2.70.210.12:FF:000001">
    <property type="entry name" value="GTPase Obg"/>
    <property type="match status" value="1"/>
</dbReference>
<dbReference type="Gene3D" id="3.30.300.350">
    <property type="entry name" value="GTP-binding protein OBG, C-terminal domain"/>
    <property type="match status" value="1"/>
</dbReference>
<dbReference type="Gene3D" id="2.70.210.12">
    <property type="entry name" value="GTP1/OBG domain"/>
    <property type="match status" value="1"/>
</dbReference>
<dbReference type="Gene3D" id="3.40.50.300">
    <property type="entry name" value="P-loop containing nucleotide triphosphate hydrolases"/>
    <property type="match status" value="1"/>
</dbReference>
<dbReference type="HAMAP" id="MF_01454">
    <property type="entry name" value="GTPase_Obg"/>
    <property type="match status" value="1"/>
</dbReference>
<dbReference type="InterPro" id="IPR031167">
    <property type="entry name" value="G_OBG"/>
</dbReference>
<dbReference type="InterPro" id="IPR006073">
    <property type="entry name" value="GTP-bd"/>
</dbReference>
<dbReference type="InterPro" id="IPR014100">
    <property type="entry name" value="GTP-bd_Obg/CgtA"/>
</dbReference>
<dbReference type="InterPro" id="IPR036346">
    <property type="entry name" value="GTP-bd_prot_GTP1/OBG_C_sf"/>
</dbReference>
<dbReference type="InterPro" id="IPR006074">
    <property type="entry name" value="GTP1-OBG_CS"/>
</dbReference>
<dbReference type="InterPro" id="IPR006169">
    <property type="entry name" value="GTP1_OBG_dom"/>
</dbReference>
<dbReference type="InterPro" id="IPR036726">
    <property type="entry name" value="GTP1_OBG_dom_sf"/>
</dbReference>
<dbReference type="InterPro" id="IPR045086">
    <property type="entry name" value="OBG_GTPase"/>
</dbReference>
<dbReference type="InterPro" id="IPR015349">
    <property type="entry name" value="OCT_dom"/>
</dbReference>
<dbReference type="InterPro" id="IPR027417">
    <property type="entry name" value="P-loop_NTPase"/>
</dbReference>
<dbReference type="NCBIfam" id="TIGR02729">
    <property type="entry name" value="Obg_CgtA"/>
    <property type="match status" value="1"/>
</dbReference>
<dbReference type="NCBIfam" id="TIGR03595">
    <property type="entry name" value="Obg_CgtA_exten"/>
    <property type="match status" value="1"/>
</dbReference>
<dbReference type="NCBIfam" id="NF008954">
    <property type="entry name" value="PRK12296.1"/>
    <property type="match status" value="1"/>
</dbReference>
<dbReference type="NCBIfam" id="NF008955">
    <property type="entry name" value="PRK12297.1"/>
    <property type="match status" value="1"/>
</dbReference>
<dbReference type="NCBIfam" id="NF008956">
    <property type="entry name" value="PRK12299.1"/>
    <property type="match status" value="1"/>
</dbReference>
<dbReference type="PANTHER" id="PTHR11702">
    <property type="entry name" value="DEVELOPMENTALLY REGULATED GTP-BINDING PROTEIN-RELATED"/>
    <property type="match status" value="1"/>
</dbReference>
<dbReference type="PANTHER" id="PTHR11702:SF31">
    <property type="entry name" value="MITOCHONDRIAL RIBOSOME-ASSOCIATED GTPASE 2"/>
    <property type="match status" value="1"/>
</dbReference>
<dbReference type="Pfam" id="PF09269">
    <property type="entry name" value="DUF1967"/>
    <property type="match status" value="1"/>
</dbReference>
<dbReference type="Pfam" id="PF01018">
    <property type="entry name" value="GTP1_OBG"/>
    <property type="match status" value="1"/>
</dbReference>
<dbReference type="Pfam" id="PF01926">
    <property type="entry name" value="MMR_HSR1"/>
    <property type="match status" value="1"/>
</dbReference>
<dbReference type="PRINTS" id="PR00326">
    <property type="entry name" value="GTP1OBG"/>
</dbReference>
<dbReference type="SUPFAM" id="SSF102741">
    <property type="entry name" value="Obg GTP-binding protein C-terminal domain"/>
    <property type="match status" value="1"/>
</dbReference>
<dbReference type="SUPFAM" id="SSF82051">
    <property type="entry name" value="Obg GTP-binding protein N-terminal domain"/>
    <property type="match status" value="1"/>
</dbReference>
<dbReference type="SUPFAM" id="SSF52540">
    <property type="entry name" value="P-loop containing nucleoside triphosphate hydrolases"/>
    <property type="match status" value="1"/>
</dbReference>
<dbReference type="PROSITE" id="PS51710">
    <property type="entry name" value="G_OBG"/>
    <property type="match status" value="1"/>
</dbReference>
<dbReference type="PROSITE" id="PS00905">
    <property type="entry name" value="GTP1_OBG"/>
    <property type="match status" value="1"/>
</dbReference>
<dbReference type="PROSITE" id="PS51883">
    <property type="entry name" value="OBG"/>
    <property type="match status" value="1"/>
</dbReference>
<dbReference type="PROSITE" id="PS51881">
    <property type="entry name" value="OCT"/>
    <property type="match status" value="1"/>
</dbReference>
<protein>
    <recommendedName>
        <fullName evidence="1">GTPase Obg</fullName>
        <ecNumber evidence="1">3.6.5.-</ecNumber>
    </recommendedName>
    <alternativeName>
        <fullName evidence="1">GTP-binding protein Obg</fullName>
    </alternativeName>
</protein>
<reference key="1">
    <citation type="journal article" date="2008" name="J. Bacteriol.">
        <title>Genome sequence of the streptomycin-producing microorganism Streptomyces griseus IFO 13350.</title>
        <authorList>
            <person name="Ohnishi Y."/>
            <person name="Ishikawa J."/>
            <person name="Hara H."/>
            <person name="Suzuki H."/>
            <person name="Ikenoya M."/>
            <person name="Ikeda H."/>
            <person name="Yamashita A."/>
            <person name="Hattori M."/>
            <person name="Horinouchi S."/>
        </authorList>
    </citation>
    <scope>NUCLEOTIDE SEQUENCE [LARGE SCALE GENOMIC DNA]</scope>
    <source>
        <strain>JCM 4626 / CBS 651.72 / NBRC 13350 / KCC S-0626 / ISP 5235</strain>
    </source>
</reference>
<keyword id="KW-0963">Cytoplasm</keyword>
<keyword id="KW-0342">GTP-binding</keyword>
<keyword id="KW-0378">Hydrolase</keyword>
<keyword id="KW-0460">Magnesium</keyword>
<keyword id="KW-0479">Metal-binding</keyword>
<keyword id="KW-0547">Nucleotide-binding</keyword>